<name>YEAL_SALPA</name>
<accession>Q5PHE0</accession>
<proteinExistence type="inferred from homology"/>
<comment type="subcellular location">
    <subcellularLocation>
        <location evidence="1">Cell membrane</location>
        <topology evidence="1">Multi-pass membrane protein</topology>
    </subcellularLocation>
</comment>
<comment type="similarity">
    <text evidence="1">Belongs to the UPF0756 family.</text>
</comment>
<evidence type="ECO:0000255" key="1">
    <source>
        <dbReference type="HAMAP-Rule" id="MF_01874"/>
    </source>
</evidence>
<reference key="1">
    <citation type="journal article" date="2004" name="Nat. Genet.">
        <title>Comparison of genome degradation in Paratyphi A and Typhi, human-restricted serovars of Salmonella enterica that cause typhoid.</title>
        <authorList>
            <person name="McClelland M."/>
            <person name="Sanderson K.E."/>
            <person name="Clifton S.W."/>
            <person name="Latreille P."/>
            <person name="Porwollik S."/>
            <person name="Sabo A."/>
            <person name="Meyer R."/>
            <person name="Bieri T."/>
            <person name="Ozersky P."/>
            <person name="McLellan M."/>
            <person name="Harkins C.R."/>
            <person name="Wang C."/>
            <person name="Nguyen C."/>
            <person name="Berghoff A."/>
            <person name="Elliott G."/>
            <person name="Kohlberg S."/>
            <person name="Strong C."/>
            <person name="Du F."/>
            <person name="Carter J."/>
            <person name="Kremizki C."/>
            <person name="Layman D."/>
            <person name="Leonard S."/>
            <person name="Sun H."/>
            <person name="Fulton L."/>
            <person name="Nash W."/>
            <person name="Miner T."/>
            <person name="Minx P."/>
            <person name="Delehaunty K."/>
            <person name="Fronick C."/>
            <person name="Magrini V."/>
            <person name="Nhan M."/>
            <person name="Warren W."/>
            <person name="Florea L."/>
            <person name="Spieth J."/>
            <person name="Wilson R.K."/>
        </authorList>
    </citation>
    <scope>NUCLEOTIDE SEQUENCE [LARGE SCALE GENOMIC DNA]</scope>
    <source>
        <strain>ATCC 9150 / SARB42</strain>
    </source>
</reference>
<organism>
    <name type="scientific">Salmonella paratyphi A (strain ATCC 9150 / SARB42)</name>
    <dbReference type="NCBI Taxonomy" id="295319"/>
    <lineage>
        <taxon>Bacteria</taxon>
        <taxon>Pseudomonadati</taxon>
        <taxon>Pseudomonadota</taxon>
        <taxon>Gammaproteobacteria</taxon>
        <taxon>Enterobacterales</taxon>
        <taxon>Enterobacteriaceae</taxon>
        <taxon>Salmonella</taxon>
    </lineage>
</organism>
<sequence>MFDVTLLILLGLAALGFISHNTTVAVSILVLIIVRVTPLNTFFPWIEKQGLTVGIIILTIGVMAPIASGTLPPSTLIHSFVNWKSLVAIAVGVFVSWLGGRGITLMGNQPQLVAGLLVGTVLGVALFRGVPVGPLIAAGLVSLIVGKQ</sequence>
<protein>
    <recommendedName>
        <fullName evidence="1">UPF0756 membrane protein YeaL</fullName>
    </recommendedName>
</protein>
<feature type="chain" id="PRO_0000388928" description="UPF0756 membrane protein YeaL">
    <location>
        <begin position="1"/>
        <end position="148"/>
    </location>
</feature>
<feature type="transmembrane region" description="Helical" evidence="1">
    <location>
        <begin position="14"/>
        <end position="34"/>
    </location>
</feature>
<feature type="transmembrane region" description="Helical" evidence="1">
    <location>
        <begin position="51"/>
        <end position="71"/>
    </location>
</feature>
<feature type="transmembrane region" description="Helical" evidence="1">
    <location>
        <begin position="86"/>
        <end position="106"/>
    </location>
</feature>
<feature type="transmembrane region" description="Helical" evidence="1">
    <location>
        <begin position="121"/>
        <end position="141"/>
    </location>
</feature>
<gene>
    <name evidence="1" type="primary">yeaL</name>
    <name type="ordered locus">SPA1564</name>
</gene>
<dbReference type="EMBL" id="CP000026">
    <property type="protein sequence ID" value="AAV77496.1"/>
    <property type="molecule type" value="Genomic_DNA"/>
</dbReference>
<dbReference type="RefSeq" id="WP_000460698.1">
    <property type="nucleotide sequence ID" value="NC_006511.1"/>
</dbReference>
<dbReference type="KEGG" id="spt:SPA1564"/>
<dbReference type="HOGENOM" id="CLU_125889_0_0_6"/>
<dbReference type="Proteomes" id="UP000008185">
    <property type="component" value="Chromosome"/>
</dbReference>
<dbReference type="GO" id="GO:0005886">
    <property type="term" value="C:plasma membrane"/>
    <property type="evidence" value="ECO:0007669"/>
    <property type="project" value="UniProtKB-SubCell"/>
</dbReference>
<dbReference type="HAMAP" id="MF_01874">
    <property type="entry name" value="UPF0756"/>
    <property type="match status" value="1"/>
</dbReference>
<dbReference type="InterPro" id="IPR007382">
    <property type="entry name" value="UPF0756_TM"/>
</dbReference>
<dbReference type="PANTHER" id="PTHR38452">
    <property type="entry name" value="UPF0756 MEMBRANE PROTEIN YEAL"/>
    <property type="match status" value="1"/>
</dbReference>
<dbReference type="PANTHER" id="PTHR38452:SF1">
    <property type="entry name" value="UPF0756 MEMBRANE PROTEIN YEAL"/>
    <property type="match status" value="1"/>
</dbReference>
<dbReference type="Pfam" id="PF04284">
    <property type="entry name" value="DUF441"/>
    <property type="match status" value="1"/>
</dbReference>
<keyword id="KW-1003">Cell membrane</keyword>
<keyword id="KW-0472">Membrane</keyword>
<keyword id="KW-0812">Transmembrane</keyword>
<keyword id="KW-1133">Transmembrane helix</keyword>